<feature type="chain" id="PRO_0000459396" description="DNA-binding protein RFX7">
    <location>
        <begin position="1"/>
        <end position="1442"/>
    </location>
</feature>
<feature type="DNA-binding region" description="RFX-type winged-helix" evidence="3">
    <location>
        <begin position="112"/>
        <end position="187"/>
    </location>
</feature>
<feature type="region of interest" description="Disordered" evidence="4">
    <location>
        <begin position="1"/>
        <end position="36"/>
    </location>
</feature>
<feature type="region of interest" description="Disordered" evidence="4">
    <location>
        <begin position="406"/>
        <end position="426"/>
    </location>
</feature>
<feature type="region of interest" description="Disordered" evidence="4">
    <location>
        <begin position="485"/>
        <end position="514"/>
    </location>
</feature>
<feature type="region of interest" description="Disordered" evidence="4">
    <location>
        <begin position="929"/>
        <end position="1001"/>
    </location>
</feature>
<feature type="short sequence motif" description="PxLPxI/L motif" evidence="2">
    <location>
        <begin position="192"/>
        <end position="197"/>
    </location>
</feature>
<feature type="compositionally biased region" description="Pro residues" evidence="4">
    <location>
        <begin position="935"/>
        <end position="947"/>
    </location>
</feature>
<feature type="compositionally biased region" description="Polar residues" evidence="4">
    <location>
        <begin position="957"/>
        <end position="995"/>
    </location>
</feature>
<protein>
    <recommendedName>
        <fullName evidence="6">DNA-binding protein RFX7</fullName>
    </recommendedName>
    <alternativeName>
        <fullName evidence="6">Regulatory factor X 7</fullName>
    </alternativeName>
</protein>
<reference evidence="8" key="1">
    <citation type="submission" date="2023-03" db="UniProtKB">
        <authorList>
            <consortium name="RefSeq"/>
        </authorList>
    </citation>
    <scope>IDENTIFICATION</scope>
    <source>
        <strain evidence="8">J_2021</strain>
        <tissue evidence="8">Erythrocyte</tissue>
    </source>
</reference>
<reference evidence="6" key="2">
    <citation type="journal article" date="2014" name="Mech. Dev.">
        <title>RFX7 is required for the formation of cilia in the neural tube.</title>
        <authorList>
            <person name="Manojlovic Z."/>
            <person name="Earwood R."/>
            <person name="Kato A."/>
            <person name="Stefanovic B."/>
            <person name="Kato Y."/>
        </authorList>
    </citation>
    <scope>FUNCTION</scope>
    <scope>DEVELOPMENTAL STAGE</scope>
    <scope>DISRUPTION PHENOTYPE</scope>
</reference>
<gene>
    <name evidence="9" type="primary">rfx7.L</name>
</gene>
<proteinExistence type="evidence at transcript level"/>
<organism evidence="7">
    <name type="scientific">Xenopus laevis</name>
    <name type="common">African clawed frog</name>
    <dbReference type="NCBI Taxonomy" id="8355"/>
    <lineage>
        <taxon>Eukaryota</taxon>
        <taxon>Metazoa</taxon>
        <taxon>Chordata</taxon>
        <taxon>Craniata</taxon>
        <taxon>Vertebrata</taxon>
        <taxon>Euteleostomi</taxon>
        <taxon>Amphibia</taxon>
        <taxon>Batrachia</taxon>
        <taxon>Anura</taxon>
        <taxon>Pipoidea</taxon>
        <taxon>Pipidae</taxon>
        <taxon>Xenopodinae</taxon>
        <taxon>Xenopus</taxon>
        <taxon>Xenopus</taxon>
    </lineage>
</organism>
<evidence type="ECO:0000250" key="1">
    <source>
        <dbReference type="UniProtKB" id="F8VPJ6"/>
    </source>
</evidence>
<evidence type="ECO:0000250" key="2">
    <source>
        <dbReference type="UniProtKB" id="Q2KHR2"/>
    </source>
</evidence>
<evidence type="ECO:0000255" key="3">
    <source>
        <dbReference type="PROSITE-ProRule" id="PRU00858"/>
    </source>
</evidence>
<evidence type="ECO:0000256" key="4">
    <source>
        <dbReference type="SAM" id="MobiDB-lite"/>
    </source>
</evidence>
<evidence type="ECO:0000269" key="5">
    <source>
    </source>
</evidence>
<evidence type="ECO:0000305" key="6"/>
<evidence type="ECO:0000312" key="7">
    <source>
        <dbReference type="Proteomes" id="UP000186698"/>
    </source>
</evidence>
<evidence type="ECO:0000312" key="8">
    <source>
        <dbReference type="RefSeq" id="XP_018108535.1"/>
    </source>
</evidence>
<evidence type="ECO:0000312" key="9">
    <source>
        <dbReference type="Xenbase" id="XB-GENE-6487664"/>
    </source>
</evidence>
<sequence>MEEEQQQQQQQQQAQKMQGTEQSAQLPPSAPGALPALVTGLQGTEANALQHKIKNSICKSIQSKVDCILQEVEKFTDLEKLFLYLKLPSGPSNVEKSDQNSLSSSRAQQTHAFSWIRNTLEEHPETSLPKQEVYDEYKSYCDNLGYHPLSAADFGKIMKNVFPNMKARRLGTRGKSKYCYSGLRKKAFVHMPSLPNLDFNTSGDGLDGIEVSTLLQSADEEVVSAACRLVCEWAQKVLSQPFDSVLDLARFLVKSHYIGTKSMAALTVMAGDSAGLKGITQTSAFVPMSESNSFHPQVRNLTSQVDAKQQLQRKIQKKQQEQKLQSPLPGELQVKKQDGTASNGITNICNGSPAILSPQPIGIVVAAVQSPIPVQRNRPLVTSPSPIGSSEGKVLPLNVQVVTQHMQSVKPKTPQNIPASPVGDRSARHRYPQILPKPASSNALTIRSPTTVVFTSSPIKTVVPTPHVSSLNVVKMTTISLAPSSAGTTVKQTSNNSTSATDETRTGPQIKNGSVVSLQSPVPRVGTPVASSVEVKTEPEIVSEDTAVRCQKSPDSSKVQKRTLMSFTHKGNQESVTSKLSHDATRDQAVKSIDHRAEGTRTKCKSRSVEGINVSSTGSNQSTLTLCVAPRTLFNNRSSQNTNGDQGVKDVRMCTKSPRKRLPTTGQESPIPPAKKSLLGQLPSECPAPEGIAIKKIPKTLSAKNDDAVTLALVPSKETEGNNTTLAANYSLSCVAEAPSDTPQELVASSQDVNLKLEGNVFKFVNESKSDNPFSQDAWQQIAEDADFPSSNCEQTQTIGVLDMSGTSGADNLQKPVWDTVDFEGIQQDTYSQQLEDSSLNQLQAHSSNQLPQRSDMTDPSFFSFDDDLTQDSIVEELVLMEEQMSMNNNPQNYGNLGMVLQNQSTASHGTPVPTHPGSAHFYHSVHSSVTPVHTPTPTPTPTPTLTPTPTSEMMCGTQSLSRESPCSRLAQTTPVDSALGSSRHTPVGTPHSNCSSSVPPSPVECRNPFAFTPISASISYDASIVSSSPVKPMQRPMATHPDKTKLEWMNNGYSSVVNPSISSHGILQSYKELDSFRKPHAFAVPGQSYQSQSRHHDNHFGRLTPVSPVQHQLSIINNASKQEGFAVPAPLDNKSTNSSGNSNFRCRSVSPAVHRQRNLSGNTNCPVSNVPQSNMTAFGTLVAPEIQSILNNIQPDSANSIAQRSQSVPLTVMMQTAFPSLQKQSNTQNITHVLLSKLDSDRDDAVRGLGINNLPSNYTARMNLTQILETSPMFSGASQQNILNSSSSSYEFQTPSYLTKNNSSEQISFTPGENQAQADDIGEQQLDFSSTVKDLLDGDSLQTNQQLVVQVASELNNASDFSSDIRLSSELSGSINDLNTLDPNLLFDPGRQPGQDEDATLEELNNDPLFQQICNESINSMTSSGFEWMESKDHPTVEMLG</sequence>
<name>RFX7_XENLA</name>
<comment type="function">
    <text evidence="1 2 5">Transcription factor (By similarity). Acts as a transcriptional activator by binding to promoter regions of target genes (By similarity). Plays a role in natural killer (NK) cell maintenance and immunity (By similarity). Plays a role in the process of ciliogenesis in the neural tube and neural tube closure by regulating the expression of RFX4 (PubMed:24530844).</text>
</comment>
<comment type="subcellular location">
    <subcellularLocation>
        <location evidence="1">Nucleus</location>
    </subcellularLocation>
</comment>
<comment type="developmental stage">
    <text evidence="5">Expressed throughout embryogenesis (PubMed:24530844). Expressed on the dorsal side of the ectoderm at stage 10 (gastrula) and in the neural plate at stage 14 (neurula) (PubMed:24530844). Expressed in brain, spinal cord, eyes, otic vesicles, as well as the somites at the tailbud stage (PubMed:24530844).</text>
</comment>
<comment type="disruption phenotype">
    <text evidence="5">Morpholino-mediated knockdown in embryos results in a defect of ciliogenesis in the neural tube and failure of neural tube closure (PubMed:24530844). At stage 18 (late neurula), neural folds fail to close (PubMed:24530844). At stage 23 (early tailbud), lack of acetylated alpha-tubulin and ARL13B positive cilia (PubMed:24530844). Reduced expression of TTC25 in cilia axonemes (PubMed:24530844).</text>
</comment>
<comment type="similarity">
    <text evidence="6">Belongs to the RFX family.</text>
</comment>
<dbReference type="RefSeq" id="XP_018108535.1">
    <property type="nucleotide sequence ID" value="XM_018253046.2"/>
</dbReference>
<dbReference type="SMR" id="A0A1L8H0H2"/>
<dbReference type="STRING" id="8355.A0A1L8H0H2"/>
<dbReference type="PaxDb" id="8355-A0A1L8H0H2"/>
<dbReference type="GeneID" id="108711371"/>
<dbReference type="KEGG" id="xla:108711371"/>
<dbReference type="AGR" id="Xenbase:XB-GENE-6487664"/>
<dbReference type="CTD" id="108711371"/>
<dbReference type="Xenbase" id="XB-GENE-6487664">
    <property type="gene designation" value="rfx7.L"/>
</dbReference>
<dbReference type="OMA" id="GNCVDVS"/>
<dbReference type="OrthoDB" id="10069709at2759"/>
<dbReference type="Proteomes" id="UP000186698">
    <property type="component" value="Chromosome 3L"/>
</dbReference>
<dbReference type="Bgee" id="108711371">
    <property type="expression patterns" value="Expressed in blastula and 19 other cell types or tissues"/>
</dbReference>
<dbReference type="GO" id="GO:0005634">
    <property type="term" value="C:nucleus"/>
    <property type="evidence" value="ECO:0000250"/>
    <property type="project" value="UniProtKB"/>
</dbReference>
<dbReference type="GO" id="GO:0000981">
    <property type="term" value="F:DNA-binding transcription factor activity, RNA polymerase II-specific"/>
    <property type="evidence" value="ECO:0000318"/>
    <property type="project" value="GO_Central"/>
</dbReference>
<dbReference type="GO" id="GO:0000978">
    <property type="term" value="F:RNA polymerase II cis-regulatory region sequence-specific DNA binding"/>
    <property type="evidence" value="ECO:0000318"/>
    <property type="project" value="GO_Central"/>
</dbReference>
<dbReference type="GO" id="GO:0000979">
    <property type="term" value="F:RNA polymerase II core promoter sequence-specific DNA binding"/>
    <property type="evidence" value="ECO:0000250"/>
    <property type="project" value="UniProtKB"/>
</dbReference>
<dbReference type="GO" id="GO:0045944">
    <property type="term" value="P:positive regulation of transcription by RNA polymerase II"/>
    <property type="evidence" value="ECO:0000250"/>
    <property type="project" value="UniProtKB"/>
</dbReference>
<dbReference type="GO" id="GO:0006357">
    <property type="term" value="P:regulation of transcription by RNA polymerase II"/>
    <property type="evidence" value="ECO:0000318"/>
    <property type="project" value="GO_Central"/>
</dbReference>
<dbReference type="FunFam" id="1.10.10.10:FF:000128">
    <property type="entry name" value="DNA-binding protein RFX5 isoform X1"/>
    <property type="match status" value="1"/>
</dbReference>
<dbReference type="Gene3D" id="6.10.140.1290">
    <property type="match status" value="1"/>
</dbReference>
<dbReference type="Gene3D" id="1.10.10.10">
    <property type="entry name" value="Winged helix-like DNA-binding domain superfamily/Winged helix DNA-binding domain"/>
    <property type="match status" value="1"/>
</dbReference>
<dbReference type="InterPro" id="IPR003150">
    <property type="entry name" value="DNA-bd_RFX"/>
</dbReference>
<dbReference type="InterPro" id="IPR039779">
    <property type="entry name" value="RFX-like"/>
</dbReference>
<dbReference type="InterPro" id="IPR036388">
    <property type="entry name" value="WH-like_DNA-bd_sf"/>
</dbReference>
<dbReference type="InterPro" id="IPR036390">
    <property type="entry name" value="WH_DNA-bd_sf"/>
</dbReference>
<dbReference type="PANTHER" id="PTHR12619:SF2">
    <property type="entry name" value="DNA-BINDING PROTEIN RFX7"/>
    <property type="match status" value="1"/>
</dbReference>
<dbReference type="PANTHER" id="PTHR12619">
    <property type="entry name" value="RFX TRANSCRIPTION FACTOR FAMILY"/>
    <property type="match status" value="1"/>
</dbReference>
<dbReference type="Pfam" id="PF18326">
    <property type="entry name" value="RFX5_N"/>
    <property type="match status" value="1"/>
</dbReference>
<dbReference type="Pfam" id="PF02257">
    <property type="entry name" value="RFX_DNA_binding"/>
    <property type="match status" value="1"/>
</dbReference>
<dbReference type="SUPFAM" id="SSF46785">
    <property type="entry name" value="Winged helix' DNA-binding domain"/>
    <property type="match status" value="1"/>
</dbReference>
<dbReference type="PROSITE" id="PS51526">
    <property type="entry name" value="RFX_DBD"/>
    <property type="match status" value="1"/>
</dbReference>
<keyword id="KW-0238">DNA-binding</keyword>
<keyword id="KW-0539">Nucleus</keyword>
<keyword id="KW-1185">Reference proteome</keyword>
<accession>A0A1L8H0H2</accession>